<keyword id="KW-0472">Membrane</keyword>
<keyword id="KW-0479">Metal-binding</keyword>
<keyword id="KW-0611">Plant defense</keyword>
<keyword id="KW-1185">Reference proteome</keyword>
<keyword id="KW-0808">Transferase</keyword>
<keyword id="KW-0812">Transmembrane</keyword>
<keyword id="KW-1133">Transmembrane helix</keyword>
<keyword id="KW-0833">Ubl conjugation pathway</keyword>
<keyword id="KW-0862">Zinc</keyword>
<keyword id="KW-0863">Zinc-finger</keyword>
<accession>Q8L9T5</accession>
<accession>O24008</accession>
<accession>Q4FE42</accession>
<accession>Q9LUR1</accession>
<protein>
    <recommendedName>
        <fullName>RING-H2 finger protein ATL2</fullName>
        <ecNumber evidence="8">2.3.2.27</ecNumber>
    </recommendedName>
    <alternativeName>
        <fullName>Protein ARABIDOPSIS TOXICOS EN LEVADURA 2</fullName>
        <shortName>Protein ATL2</shortName>
    </alternativeName>
    <alternativeName>
        <fullName evidence="8">RING-type E3 ubiquitin transferase ATL2</fullName>
    </alternativeName>
</protein>
<sequence>MNSNDQDPIPFRPEDNNFSGSKTYAMSGKIMLSAIVILFFVVILMVFLHLYARWYLLRARRRHLRRRSRNRRATMVFFTADPSTAATSVVASRGLDPNVIKSLPVFTFSDETHKDPIECAVCLSEFEESETGRVLPNCQHTFHVDCIDMWFHSHSTCPLCRSLVESLAGIESTAAAREREVVIAVDSDPVLVIEPSSSSGLTDEPHGSGSSQMLREDSGRKPAAIEVPRRTFSEFEDELTRRDSPASQSFRSPMSRMLSFTRMLSRDRRSASSPIAGAPPLSPTLSCRIQMTESDIERGGEESR</sequence>
<proteinExistence type="evidence at transcript level"/>
<reference key="1">
    <citation type="journal article" date="1996" name="Mol. Gen. Genet.">
        <title>Gene isolation in Arabidopsis thaliana by conditional overexpression of cDNAs toxic to Saccharomyces cerevisiae: identification of a novel early response zinc-finger gene.</title>
        <authorList>
            <person name="Martinez-Garcia M."/>
            <person name="Garciduenas-Pina C."/>
            <person name="Guzman P."/>
        </authorList>
    </citation>
    <scope>NUCLEOTIDE SEQUENCE [GENOMIC DNA]</scope>
</reference>
<reference key="2">
    <citation type="journal article" date="2005" name="Plant Physiol.">
        <title>Functional analysis of the RING-type ubiquitin ligase family of Arabidopsis.</title>
        <authorList>
            <person name="Stone S.L."/>
            <person name="Hauksdottir H."/>
            <person name="Troy A."/>
            <person name="Herschleb J."/>
            <person name="Kraft E."/>
            <person name="Callis J."/>
        </authorList>
    </citation>
    <scope>NUCLEOTIDE SEQUENCE [MRNA]</scope>
    <source>
        <strain>cv. Columbia</strain>
        <tissue>Flower</tissue>
        <tissue>Leaf</tissue>
        <tissue>Seedling</tissue>
    </source>
</reference>
<reference key="3">
    <citation type="journal article" date="2000" name="DNA Res.">
        <title>Structural analysis of Arabidopsis thaliana chromosome 3. I. Sequence features of the regions of 4,504,864 bp covered by sixty P1 and TAC clones.</title>
        <authorList>
            <person name="Sato S."/>
            <person name="Nakamura Y."/>
            <person name="Kaneko T."/>
            <person name="Katoh T."/>
            <person name="Asamizu E."/>
            <person name="Tabata S."/>
        </authorList>
    </citation>
    <scope>NUCLEOTIDE SEQUENCE [LARGE SCALE GENOMIC DNA]</scope>
    <source>
        <strain>cv. Columbia</strain>
    </source>
</reference>
<reference key="4">
    <citation type="journal article" date="2017" name="Plant J.">
        <title>Araport11: a complete reannotation of the Arabidopsis thaliana reference genome.</title>
        <authorList>
            <person name="Cheng C.Y."/>
            <person name="Krishnakumar V."/>
            <person name="Chan A.P."/>
            <person name="Thibaud-Nissen F."/>
            <person name="Schobel S."/>
            <person name="Town C.D."/>
        </authorList>
    </citation>
    <scope>GENOME REANNOTATION</scope>
    <source>
        <strain>cv. Columbia</strain>
    </source>
</reference>
<reference key="5">
    <citation type="journal article" date="2003" name="Science">
        <title>Empirical analysis of transcriptional activity in the Arabidopsis genome.</title>
        <authorList>
            <person name="Yamada K."/>
            <person name="Lim J."/>
            <person name="Dale J.M."/>
            <person name="Chen H."/>
            <person name="Shinn P."/>
            <person name="Palm C.J."/>
            <person name="Southwick A.M."/>
            <person name="Wu H.C."/>
            <person name="Kim C.J."/>
            <person name="Nguyen M."/>
            <person name="Pham P.K."/>
            <person name="Cheuk R.F."/>
            <person name="Karlin-Newmann G."/>
            <person name="Liu S.X."/>
            <person name="Lam B."/>
            <person name="Sakano H."/>
            <person name="Wu T."/>
            <person name="Yu G."/>
            <person name="Miranda M."/>
            <person name="Quach H.L."/>
            <person name="Tripp M."/>
            <person name="Chang C.H."/>
            <person name="Lee J.M."/>
            <person name="Toriumi M.J."/>
            <person name="Chan M.M."/>
            <person name="Tang C.C."/>
            <person name="Onodera C.S."/>
            <person name="Deng J.M."/>
            <person name="Akiyama K."/>
            <person name="Ansari Y."/>
            <person name="Arakawa T."/>
            <person name="Banh J."/>
            <person name="Banno F."/>
            <person name="Bowser L."/>
            <person name="Brooks S.Y."/>
            <person name="Carninci P."/>
            <person name="Chao Q."/>
            <person name="Choy N."/>
            <person name="Enju A."/>
            <person name="Goldsmith A.D."/>
            <person name="Gurjal M."/>
            <person name="Hansen N.F."/>
            <person name="Hayashizaki Y."/>
            <person name="Johnson-Hopson C."/>
            <person name="Hsuan V.W."/>
            <person name="Iida K."/>
            <person name="Karnes M."/>
            <person name="Khan S."/>
            <person name="Koesema E."/>
            <person name="Ishida J."/>
            <person name="Jiang P.X."/>
            <person name="Jones T."/>
            <person name="Kawai J."/>
            <person name="Kamiya A."/>
            <person name="Meyers C."/>
            <person name="Nakajima M."/>
            <person name="Narusaka M."/>
            <person name="Seki M."/>
            <person name="Sakurai T."/>
            <person name="Satou M."/>
            <person name="Tamse R."/>
            <person name="Vaysberg M."/>
            <person name="Wallender E.K."/>
            <person name="Wong C."/>
            <person name="Yamamura Y."/>
            <person name="Yuan S."/>
            <person name="Shinozaki K."/>
            <person name="Davis R.W."/>
            <person name="Theologis A."/>
            <person name="Ecker J.R."/>
        </authorList>
    </citation>
    <scope>NUCLEOTIDE SEQUENCE [LARGE SCALE MRNA]</scope>
    <source>
        <strain>cv. Columbia</strain>
    </source>
</reference>
<reference key="6">
    <citation type="submission" date="2002-03" db="EMBL/GenBank/DDBJ databases">
        <title>Full-length cDNA from Arabidopsis thaliana.</title>
        <authorList>
            <person name="Brover V.V."/>
            <person name="Troukhan M.E."/>
            <person name="Alexandrov N.A."/>
            <person name="Lu Y.-P."/>
            <person name="Flavell R.B."/>
            <person name="Feldmann K.A."/>
        </authorList>
    </citation>
    <scope>NUCLEOTIDE SEQUENCE [LARGE SCALE MRNA]</scope>
</reference>
<reference key="7">
    <citation type="journal article" date="1999" name="Plant Mol. Biol.">
        <title>Early elicitor induction in members of a novel multigene family coding for highly related RING-H2 proteins in Arabidopsis thaliana.</title>
        <authorList>
            <person name="Salinas-Mondragon R.E."/>
            <person name="Garciduenas-Pina C."/>
            <person name="Guzman P."/>
        </authorList>
    </citation>
    <scope>INDUCTION</scope>
</reference>
<reference key="8">
    <citation type="journal article" date="2002" name="Genome Biol.">
        <title>Evaluation and classification of RING-finger domains encoded by the Arabidopsis genome.</title>
        <authorList>
            <person name="Kosarev P."/>
            <person name="Mayer K.F.X."/>
            <person name="Hardtke C.S."/>
        </authorList>
    </citation>
    <scope>GENE FAMILY ORGANIZATION</scope>
</reference>
<reference key="9">
    <citation type="journal article" date="2004" name="Genetics">
        <title>Isolation and gene expression analysis of Arabidopsis thaliana mutants with constitutive expression of ATL2, an early elicitor-response RING-H2 zinc-finger gene.</title>
        <authorList>
            <person name="Serrano M."/>
            <person name="Guzman P."/>
        </authorList>
    </citation>
    <scope>TISSUE SPECIFICITY</scope>
    <scope>INDUCTION</scope>
</reference>
<reference key="10">
    <citation type="journal article" date="2006" name="J. Mol. Evol.">
        <title>The ATL gene family from Arabidopsis thaliana and Oryza sativa comprises a large number of putative ubiquitin ligases of the RING-H2 type.</title>
        <authorList>
            <person name="Serrano M."/>
            <person name="Parra S."/>
            <person name="Alcaraz L.D."/>
            <person name="Guzman P."/>
        </authorList>
    </citation>
    <scope>NOMENCLATURE</scope>
    <scope>GENE FAMILY ORGANIZATION</scope>
</reference>
<reference key="11">
    <citation type="journal article" date="2007" name="Mol. Plant Microbe Interact.">
        <title>Identification of 118 Arabidopsis transcription factor and 30 ubiquitin-ligase genes responding to chitin, a plant-defense elicitor.</title>
        <authorList>
            <person name="Libault M."/>
            <person name="Wan J."/>
            <person name="Czechowski T."/>
            <person name="Udvardi M."/>
            <person name="Stacey G."/>
        </authorList>
    </citation>
    <scope>INDUCTION BY CHITIN</scope>
</reference>
<feature type="chain" id="PRO_0000055791" description="RING-H2 finger protein ATL2">
    <location>
        <begin position="1"/>
        <end position="304"/>
    </location>
</feature>
<feature type="transmembrane region" description="Helical" evidence="2">
    <location>
        <begin position="30"/>
        <end position="50"/>
    </location>
</feature>
<feature type="zinc finger region" description="RING-type; atypical" evidence="3">
    <location>
        <begin position="119"/>
        <end position="161"/>
    </location>
</feature>
<feature type="region of interest" description="Disordered" evidence="4">
    <location>
        <begin position="194"/>
        <end position="304"/>
    </location>
</feature>
<feature type="compositionally biased region" description="Basic and acidic residues" evidence="4">
    <location>
        <begin position="227"/>
        <end position="244"/>
    </location>
</feature>
<feature type="compositionally biased region" description="Polar residues" evidence="4">
    <location>
        <begin position="283"/>
        <end position="293"/>
    </location>
</feature>
<feature type="compositionally biased region" description="Basic and acidic residues" evidence="4">
    <location>
        <begin position="295"/>
        <end position="304"/>
    </location>
</feature>
<feature type="sequence conflict" description="In Ref. 1; AAC77829." evidence="8" ref="1">
    <original>S</original>
    <variation>F</variation>
    <location>
        <position position="83"/>
    </location>
</feature>
<feature type="sequence conflict" description="In Ref. 6; AAM65773." evidence="8" ref="6">
    <original>S</original>
    <variation>P</variation>
    <location>
        <position position="166"/>
    </location>
</feature>
<feature type="sequence conflict" description="In Ref. 1; AAC77829." evidence="8" ref="1">
    <original>S</original>
    <variation>G</variation>
    <location>
        <position position="303"/>
    </location>
</feature>
<organism>
    <name type="scientific">Arabidopsis thaliana</name>
    <name type="common">Mouse-ear cress</name>
    <dbReference type="NCBI Taxonomy" id="3702"/>
    <lineage>
        <taxon>Eukaryota</taxon>
        <taxon>Viridiplantae</taxon>
        <taxon>Streptophyta</taxon>
        <taxon>Embryophyta</taxon>
        <taxon>Tracheophyta</taxon>
        <taxon>Spermatophyta</taxon>
        <taxon>Magnoliopsida</taxon>
        <taxon>eudicotyledons</taxon>
        <taxon>Gunneridae</taxon>
        <taxon>Pentapetalae</taxon>
        <taxon>rosids</taxon>
        <taxon>malvids</taxon>
        <taxon>Brassicales</taxon>
        <taxon>Brassicaceae</taxon>
        <taxon>Camelineae</taxon>
        <taxon>Arabidopsis</taxon>
    </lineage>
</organism>
<evidence type="ECO:0000250" key="1"/>
<evidence type="ECO:0000255" key="2"/>
<evidence type="ECO:0000255" key="3">
    <source>
        <dbReference type="PROSITE-ProRule" id="PRU00175"/>
    </source>
</evidence>
<evidence type="ECO:0000256" key="4">
    <source>
        <dbReference type="SAM" id="MobiDB-lite"/>
    </source>
</evidence>
<evidence type="ECO:0000269" key="5">
    <source>
    </source>
</evidence>
<evidence type="ECO:0000269" key="6">
    <source>
    </source>
</evidence>
<evidence type="ECO:0000269" key="7">
    <source>
    </source>
</evidence>
<evidence type="ECO:0000305" key="8"/>
<comment type="function">
    <text>May be involved in the early steps of the plant defense signaling pathway.</text>
</comment>
<comment type="catalytic activity">
    <reaction evidence="8">
        <text>S-ubiquitinyl-[E2 ubiquitin-conjugating enzyme]-L-cysteine + [acceptor protein]-L-lysine = [E2 ubiquitin-conjugating enzyme]-L-cysteine + N(6)-ubiquitinyl-[acceptor protein]-L-lysine.</text>
        <dbReference type="EC" id="2.3.2.27"/>
    </reaction>
</comment>
<comment type="pathway">
    <text>Protein modification; protein ubiquitination.</text>
</comment>
<comment type="subcellular location">
    <subcellularLocation>
        <location evidence="8">Membrane</location>
        <topology evidence="8">Single-pass membrane protein</topology>
    </subcellularLocation>
</comment>
<comment type="tissue specificity">
    <text evidence="6">Preferentially expressed around the apical meristem region.</text>
</comment>
<comment type="induction">
    <text evidence="5 6 7">Up-regulated by chitin or cellulases elicitors.</text>
</comment>
<comment type="domain">
    <text evidence="1">The RING-type zinc finger domain mediates binding to an E2 ubiquitin-conjugating enzyme.</text>
</comment>
<comment type="similarity">
    <text evidence="8">Belongs to the RING-type zinc finger family. ATL subfamily.</text>
</comment>
<dbReference type="EC" id="2.3.2.27" evidence="8"/>
<dbReference type="EMBL" id="L76926">
    <property type="protein sequence ID" value="AAC77829.1"/>
    <property type="molecule type" value="Genomic_DNA"/>
</dbReference>
<dbReference type="EMBL" id="DQ086849">
    <property type="protein sequence ID" value="AAZ14073.1"/>
    <property type="molecule type" value="mRNA"/>
</dbReference>
<dbReference type="EMBL" id="AB022217">
    <property type="protein sequence ID" value="BAB02764.1"/>
    <property type="molecule type" value="Genomic_DNA"/>
</dbReference>
<dbReference type="EMBL" id="CP002686">
    <property type="protein sequence ID" value="AEE75857.1"/>
    <property type="molecule type" value="Genomic_DNA"/>
</dbReference>
<dbReference type="EMBL" id="AY062865">
    <property type="protein sequence ID" value="AAL32943.1"/>
    <property type="molecule type" value="mRNA"/>
</dbReference>
<dbReference type="EMBL" id="AY081621">
    <property type="protein sequence ID" value="AAM10183.1"/>
    <property type="molecule type" value="mRNA"/>
</dbReference>
<dbReference type="EMBL" id="AY088232">
    <property type="protein sequence ID" value="AAM65773.1"/>
    <property type="molecule type" value="mRNA"/>
</dbReference>
<dbReference type="PIR" id="T52079">
    <property type="entry name" value="T52079"/>
</dbReference>
<dbReference type="RefSeq" id="NP_188294.1">
    <property type="nucleotide sequence ID" value="NM_112545.2"/>
</dbReference>
<dbReference type="SMR" id="Q8L9T5"/>
<dbReference type="BioGRID" id="6258">
    <property type="interactions" value="11"/>
</dbReference>
<dbReference type="FunCoup" id="Q8L9T5">
    <property type="interactions" value="12"/>
</dbReference>
<dbReference type="STRING" id="3702.Q8L9T5"/>
<dbReference type="iPTMnet" id="Q8L9T5"/>
<dbReference type="PaxDb" id="3702-AT3G16720.1"/>
<dbReference type="ProteomicsDB" id="246751"/>
<dbReference type="EnsemblPlants" id="AT3G16720.1">
    <property type="protein sequence ID" value="AT3G16720.1"/>
    <property type="gene ID" value="AT3G16720"/>
</dbReference>
<dbReference type="GeneID" id="820924"/>
<dbReference type="Gramene" id="AT3G16720.1">
    <property type="protein sequence ID" value="AT3G16720.1"/>
    <property type="gene ID" value="AT3G16720"/>
</dbReference>
<dbReference type="KEGG" id="ath:AT3G16720"/>
<dbReference type="Araport" id="AT3G16720"/>
<dbReference type="TAIR" id="AT3G16720">
    <property type="gene designation" value="ATL2"/>
</dbReference>
<dbReference type="eggNOG" id="KOG0800">
    <property type="taxonomic scope" value="Eukaryota"/>
</dbReference>
<dbReference type="HOGENOM" id="CLU_066543_0_0_1"/>
<dbReference type="InParanoid" id="Q8L9T5"/>
<dbReference type="OMA" id="MVFFTAD"/>
<dbReference type="PhylomeDB" id="Q8L9T5"/>
<dbReference type="UniPathway" id="UPA00143"/>
<dbReference type="PRO" id="PR:Q8L9T5"/>
<dbReference type="Proteomes" id="UP000006548">
    <property type="component" value="Chromosome 3"/>
</dbReference>
<dbReference type="ExpressionAtlas" id="Q8L9T5">
    <property type="expression patterns" value="baseline and differential"/>
</dbReference>
<dbReference type="GO" id="GO:0016020">
    <property type="term" value="C:membrane"/>
    <property type="evidence" value="ECO:0007669"/>
    <property type="project" value="UniProtKB-SubCell"/>
</dbReference>
<dbReference type="GO" id="GO:0061630">
    <property type="term" value="F:ubiquitin protein ligase activity"/>
    <property type="evidence" value="ECO:0000314"/>
    <property type="project" value="TAIR"/>
</dbReference>
<dbReference type="GO" id="GO:0008270">
    <property type="term" value="F:zinc ion binding"/>
    <property type="evidence" value="ECO:0007669"/>
    <property type="project" value="UniProtKB-KW"/>
</dbReference>
<dbReference type="GO" id="GO:0006952">
    <property type="term" value="P:defense response"/>
    <property type="evidence" value="ECO:0000314"/>
    <property type="project" value="TAIR"/>
</dbReference>
<dbReference type="GO" id="GO:0016567">
    <property type="term" value="P:protein ubiquitination"/>
    <property type="evidence" value="ECO:0007669"/>
    <property type="project" value="UniProtKB-UniPathway"/>
</dbReference>
<dbReference type="CDD" id="cd16461">
    <property type="entry name" value="RING-H2_EL5-like"/>
    <property type="match status" value="1"/>
</dbReference>
<dbReference type="FunFam" id="3.30.40.10:FF:000475">
    <property type="entry name" value="RING-H2 finger protein ATL3"/>
    <property type="match status" value="1"/>
</dbReference>
<dbReference type="Gene3D" id="3.30.40.10">
    <property type="entry name" value="Zinc/RING finger domain, C3HC4 (zinc finger)"/>
    <property type="match status" value="1"/>
</dbReference>
<dbReference type="InterPro" id="IPR044600">
    <property type="entry name" value="ATL1/ATL16-like"/>
</dbReference>
<dbReference type="InterPro" id="IPR001841">
    <property type="entry name" value="Znf_RING"/>
</dbReference>
<dbReference type="InterPro" id="IPR013083">
    <property type="entry name" value="Znf_RING/FYVE/PHD"/>
</dbReference>
<dbReference type="PANTHER" id="PTHR46913">
    <property type="entry name" value="RING-H2 FINGER PROTEIN ATL16"/>
    <property type="match status" value="1"/>
</dbReference>
<dbReference type="PANTHER" id="PTHR46913:SF1">
    <property type="entry name" value="RING-H2 FINGER PROTEIN ATL16"/>
    <property type="match status" value="1"/>
</dbReference>
<dbReference type="Pfam" id="PF13639">
    <property type="entry name" value="zf-RING_2"/>
    <property type="match status" value="1"/>
</dbReference>
<dbReference type="SMART" id="SM00184">
    <property type="entry name" value="RING"/>
    <property type="match status" value="1"/>
</dbReference>
<dbReference type="SUPFAM" id="SSF57850">
    <property type="entry name" value="RING/U-box"/>
    <property type="match status" value="1"/>
</dbReference>
<dbReference type="PROSITE" id="PS50089">
    <property type="entry name" value="ZF_RING_2"/>
    <property type="match status" value="1"/>
</dbReference>
<name>ATL2_ARATH</name>
<gene>
    <name type="primary">ATL2</name>
    <name type="ordered locus">At3g16720</name>
    <name type="ORF">MGL6.19</name>
</gene>